<organism>
    <name type="scientific">Mus musculus</name>
    <name type="common">Mouse</name>
    <dbReference type="NCBI Taxonomy" id="10090"/>
    <lineage>
        <taxon>Eukaryota</taxon>
        <taxon>Metazoa</taxon>
        <taxon>Chordata</taxon>
        <taxon>Craniata</taxon>
        <taxon>Vertebrata</taxon>
        <taxon>Euteleostomi</taxon>
        <taxon>Mammalia</taxon>
        <taxon>Eutheria</taxon>
        <taxon>Euarchontoglires</taxon>
        <taxon>Glires</taxon>
        <taxon>Rodentia</taxon>
        <taxon>Myomorpha</taxon>
        <taxon>Muroidea</taxon>
        <taxon>Muridae</taxon>
        <taxon>Murinae</taxon>
        <taxon>Mus</taxon>
        <taxon>Mus</taxon>
    </lineage>
</organism>
<keyword id="KW-0025">Alternative splicing</keyword>
<keyword id="KW-0175">Coiled coil</keyword>
<keyword id="KW-0472">Membrane</keyword>
<keyword id="KW-0539">Nucleus</keyword>
<keyword id="KW-1185">Reference proteome</keyword>
<keyword id="KW-0812">Transmembrane</keyword>
<keyword id="KW-1133">Transmembrane helix</keyword>
<reference key="1">
    <citation type="journal article" date="2005" name="Science">
        <title>The transcriptional landscape of the mammalian genome.</title>
        <authorList>
            <person name="Carninci P."/>
            <person name="Kasukawa T."/>
            <person name="Katayama S."/>
            <person name="Gough J."/>
            <person name="Frith M.C."/>
            <person name="Maeda N."/>
            <person name="Oyama R."/>
            <person name="Ravasi T."/>
            <person name="Lenhard B."/>
            <person name="Wells C."/>
            <person name="Kodzius R."/>
            <person name="Shimokawa K."/>
            <person name="Bajic V.B."/>
            <person name="Brenner S.E."/>
            <person name="Batalov S."/>
            <person name="Forrest A.R."/>
            <person name="Zavolan M."/>
            <person name="Davis M.J."/>
            <person name="Wilming L.G."/>
            <person name="Aidinis V."/>
            <person name="Allen J.E."/>
            <person name="Ambesi-Impiombato A."/>
            <person name="Apweiler R."/>
            <person name="Aturaliya R.N."/>
            <person name="Bailey T.L."/>
            <person name="Bansal M."/>
            <person name="Baxter L."/>
            <person name="Beisel K.W."/>
            <person name="Bersano T."/>
            <person name="Bono H."/>
            <person name="Chalk A.M."/>
            <person name="Chiu K.P."/>
            <person name="Choudhary V."/>
            <person name="Christoffels A."/>
            <person name="Clutterbuck D.R."/>
            <person name="Crowe M.L."/>
            <person name="Dalla E."/>
            <person name="Dalrymple B.P."/>
            <person name="de Bono B."/>
            <person name="Della Gatta G."/>
            <person name="di Bernardo D."/>
            <person name="Down T."/>
            <person name="Engstrom P."/>
            <person name="Fagiolini M."/>
            <person name="Faulkner G."/>
            <person name="Fletcher C.F."/>
            <person name="Fukushima T."/>
            <person name="Furuno M."/>
            <person name="Futaki S."/>
            <person name="Gariboldi M."/>
            <person name="Georgii-Hemming P."/>
            <person name="Gingeras T.R."/>
            <person name="Gojobori T."/>
            <person name="Green R.E."/>
            <person name="Gustincich S."/>
            <person name="Harbers M."/>
            <person name="Hayashi Y."/>
            <person name="Hensch T.K."/>
            <person name="Hirokawa N."/>
            <person name="Hill D."/>
            <person name="Huminiecki L."/>
            <person name="Iacono M."/>
            <person name="Ikeo K."/>
            <person name="Iwama A."/>
            <person name="Ishikawa T."/>
            <person name="Jakt M."/>
            <person name="Kanapin A."/>
            <person name="Katoh M."/>
            <person name="Kawasawa Y."/>
            <person name="Kelso J."/>
            <person name="Kitamura H."/>
            <person name="Kitano H."/>
            <person name="Kollias G."/>
            <person name="Krishnan S.P."/>
            <person name="Kruger A."/>
            <person name="Kummerfeld S.K."/>
            <person name="Kurochkin I.V."/>
            <person name="Lareau L.F."/>
            <person name="Lazarevic D."/>
            <person name="Lipovich L."/>
            <person name="Liu J."/>
            <person name="Liuni S."/>
            <person name="McWilliam S."/>
            <person name="Madan Babu M."/>
            <person name="Madera M."/>
            <person name="Marchionni L."/>
            <person name="Matsuda H."/>
            <person name="Matsuzawa S."/>
            <person name="Miki H."/>
            <person name="Mignone F."/>
            <person name="Miyake S."/>
            <person name="Morris K."/>
            <person name="Mottagui-Tabar S."/>
            <person name="Mulder N."/>
            <person name="Nakano N."/>
            <person name="Nakauchi H."/>
            <person name="Ng P."/>
            <person name="Nilsson R."/>
            <person name="Nishiguchi S."/>
            <person name="Nishikawa S."/>
            <person name="Nori F."/>
            <person name="Ohara O."/>
            <person name="Okazaki Y."/>
            <person name="Orlando V."/>
            <person name="Pang K.C."/>
            <person name="Pavan W.J."/>
            <person name="Pavesi G."/>
            <person name="Pesole G."/>
            <person name="Petrovsky N."/>
            <person name="Piazza S."/>
            <person name="Reed J."/>
            <person name="Reid J.F."/>
            <person name="Ring B.Z."/>
            <person name="Ringwald M."/>
            <person name="Rost B."/>
            <person name="Ruan Y."/>
            <person name="Salzberg S.L."/>
            <person name="Sandelin A."/>
            <person name="Schneider C."/>
            <person name="Schoenbach C."/>
            <person name="Sekiguchi K."/>
            <person name="Semple C.A."/>
            <person name="Seno S."/>
            <person name="Sessa L."/>
            <person name="Sheng Y."/>
            <person name="Shibata Y."/>
            <person name="Shimada H."/>
            <person name="Shimada K."/>
            <person name="Silva D."/>
            <person name="Sinclair B."/>
            <person name="Sperling S."/>
            <person name="Stupka E."/>
            <person name="Sugiura K."/>
            <person name="Sultana R."/>
            <person name="Takenaka Y."/>
            <person name="Taki K."/>
            <person name="Tammoja K."/>
            <person name="Tan S.L."/>
            <person name="Tang S."/>
            <person name="Taylor M.S."/>
            <person name="Tegner J."/>
            <person name="Teichmann S.A."/>
            <person name="Ueda H.R."/>
            <person name="van Nimwegen E."/>
            <person name="Verardo R."/>
            <person name="Wei C.L."/>
            <person name="Yagi K."/>
            <person name="Yamanishi H."/>
            <person name="Zabarovsky E."/>
            <person name="Zhu S."/>
            <person name="Zimmer A."/>
            <person name="Hide W."/>
            <person name="Bult C."/>
            <person name="Grimmond S.M."/>
            <person name="Teasdale R.D."/>
            <person name="Liu E.T."/>
            <person name="Brusic V."/>
            <person name="Quackenbush J."/>
            <person name="Wahlestedt C."/>
            <person name="Mattick J.S."/>
            <person name="Hume D.A."/>
            <person name="Kai C."/>
            <person name="Sasaki D."/>
            <person name="Tomaru Y."/>
            <person name="Fukuda S."/>
            <person name="Kanamori-Katayama M."/>
            <person name="Suzuki M."/>
            <person name="Aoki J."/>
            <person name="Arakawa T."/>
            <person name="Iida J."/>
            <person name="Imamura K."/>
            <person name="Itoh M."/>
            <person name="Kato T."/>
            <person name="Kawaji H."/>
            <person name="Kawagashira N."/>
            <person name="Kawashima T."/>
            <person name="Kojima M."/>
            <person name="Kondo S."/>
            <person name="Konno H."/>
            <person name="Nakano K."/>
            <person name="Ninomiya N."/>
            <person name="Nishio T."/>
            <person name="Okada M."/>
            <person name="Plessy C."/>
            <person name="Shibata K."/>
            <person name="Shiraki T."/>
            <person name="Suzuki S."/>
            <person name="Tagami M."/>
            <person name="Waki K."/>
            <person name="Watahiki A."/>
            <person name="Okamura-Oho Y."/>
            <person name="Suzuki H."/>
            <person name="Kawai J."/>
            <person name="Hayashizaki Y."/>
        </authorList>
    </citation>
    <scope>NUCLEOTIDE SEQUENCE [LARGE SCALE MRNA] (ISOFORMS 1 AND 2)</scope>
    <source>
        <strain>C57BL/6J</strain>
        <tissue>Kidney</tissue>
        <tissue>Testis</tissue>
    </source>
</reference>
<reference key="2">
    <citation type="journal article" date="2009" name="PLoS Biol.">
        <title>Lineage-specific biology revealed by a finished genome assembly of the mouse.</title>
        <authorList>
            <person name="Church D.M."/>
            <person name="Goodstadt L."/>
            <person name="Hillier L.W."/>
            <person name="Zody M.C."/>
            <person name="Goldstein S."/>
            <person name="She X."/>
            <person name="Bult C.J."/>
            <person name="Agarwala R."/>
            <person name="Cherry J.L."/>
            <person name="DiCuccio M."/>
            <person name="Hlavina W."/>
            <person name="Kapustin Y."/>
            <person name="Meric P."/>
            <person name="Maglott D."/>
            <person name="Birtle Z."/>
            <person name="Marques A.C."/>
            <person name="Graves T."/>
            <person name="Zhou S."/>
            <person name="Teague B."/>
            <person name="Potamousis K."/>
            <person name="Churas C."/>
            <person name="Place M."/>
            <person name="Herschleb J."/>
            <person name="Runnheim R."/>
            <person name="Forrest D."/>
            <person name="Amos-Landgraf J."/>
            <person name="Schwartz D.C."/>
            <person name="Cheng Z."/>
            <person name="Lindblad-Toh K."/>
            <person name="Eichler E.E."/>
            <person name="Ponting C.P."/>
        </authorList>
    </citation>
    <scope>NUCLEOTIDE SEQUENCE [LARGE SCALE GENOMIC DNA]</scope>
    <source>
        <strain>C57BL/6J</strain>
    </source>
</reference>
<reference key="3">
    <citation type="journal article" date="2004" name="Genome Res.">
        <title>The status, quality, and expansion of the NIH full-length cDNA project: the Mammalian Gene Collection (MGC).</title>
        <authorList>
            <consortium name="The MGC Project Team"/>
        </authorList>
    </citation>
    <scope>NUCLEOTIDE SEQUENCE [LARGE SCALE MRNA] (ISOFORM 2)</scope>
</reference>
<reference key="4">
    <citation type="journal article" date="2010" name="Cell">
        <title>A tissue-specific atlas of mouse protein phosphorylation and expression.</title>
        <authorList>
            <person name="Huttlin E.L."/>
            <person name="Jedrychowski M.P."/>
            <person name="Elias J.E."/>
            <person name="Goswami T."/>
            <person name="Rad R."/>
            <person name="Beausoleil S.A."/>
            <person name="Villen J."/>
            <person name="Haas W."/>
            <person name="Sowa M.E."/>
            <person name="Gygi S.P."/>
        </authorList>
    </citation>
    <scope>IDENTIFICATION BY MASS SPECTROMETRY [LARGE SCALE ANALYSIS]</scope>
    <source>
        <tissue>Testis</tissue>
    </source>
</reference>
<reference key="5">
    <citation type="journal article" date="2010" name="PLoS ONE">
        <title>Mammalian sperm head formation involves different polarization of two novel LINC complexes.</title>
        <authorList>
            <person name="Gob E."/>
            <person name="Schmitt J."/>
            <person name="Benavente R."/>
            <person name="Alsheimer M."/>
        </authorList>
    </citation>
    <scope>SUBCELLULAR LOCATION</scope>
    <scope>SUBUNIT</scope>
    <scope>TISSUE SPECIFICITY</scope>
    <scope>FUNCTION</scope>
    <scope>DEVELOPMENTAL STAGE</scope>
</reference>
<reference key="6">
    <citation type="journal article" date="2015" name="Biol. Open">
        <title>The LINC complex component Sun4 plays a crucial role in sperm head formation and fertility.</title>
        <authorList>
            <person name="Pasch E."/>
            <person name="Link J."/>
            <person name="Beck C."/>
            <person name="Scheuerle S."/>
            <person name="Alsheimer M."/>
        </authorList>
    </citation>
    <scope>INTERACTION WITH SPAG4</scope>
    <scope>SELF-ASSOCIATION</scope>
</reference>
<name>SUN3_MOUSE</name>
<sequence length="320" mass="36758">MLTRSWKIILSTVFISTFLLVGLLNHQWLKETEFPQKPRQLYTVIAEYGSRLYNYQARLRMPKEQQELLKKESQTLENNFREILFLIEQIDVLKALLKDMKDGVHNHSLPVHRDAVQDQATTDVLDEEMSNLVHYVLKKFRGDQIQLADYALKSAGASVIEAGTSESYKNNKAKLYWHGIGFLNYEMPPDMILQPDVHPGKCWAFPGSQGHILIKLARKIIPTAVTMEHISEKVSPSGNISSAPKEFSVYGVMKKCEGEEIFLGQFIYNKMEATIQTFELQNEASESLLCVKLQILSNWGHPKYTCLYRFRVHGIPSDYT</sequence>
<feature type="chain" id="PRO_0000312222" description="SUN domain-containing protein 3">
    <location>
        <begin position="1"/>
        <end position="320"/>
    </location>
</feature>
<feature type="topological domain" description="Nuclear" evidence="7">
    <location>
        <begin position="1"/>
        <end position="6"/>
    </location>
</feature>
<feature type="transmembrane region" description="Helical" evidence="1">
    <location>
        <begin position="7"/>
        <end position="29"/>
    </location>
</feature>
<feature type="topological domain" description="Perinuclear space" evidence="7">
    <location>
        <begin position="30"/>
        <end position="320"/>
    </location>
</feature>
<feature type="domain" description="SUN" evidence="2">
    <location>
        <begin position="156"/>
        <end position="317"/>
    </location>
</feature>
<feature type="coiled-coil region" evidence="1">
    <location>
        <begin position="63"/>
        <end position="102"/>
    </location>
</feature>
<feature type="splice variant" id="VSP_029750" description="In isoform 2." evidence="5 6">
    <location>
        <begin position="1"/>
        <end position="60"/>
    </location>
</feature>
<accession>Q5SS91</accession>
<accession>Q8BHY0</accession>
<comment type="function">
    <text evidence="8">As a probable component of the LINC (LInker of Nucleoskeleton and Cytoskeleton) complex, involved in the connection between the nuclear lamina and the cytoskeleton. The nucleocytoplasmic interactions established by the LINC complex play an important role in the transmission of mechanical forces across the nuclear envelope and in nuclear movement and positioning. May be involved in nuclear remodeling during sperm head formation in spermatogenesis. A probable SUN3:SYNE1 LINC complex may tether spermatid nuclei to posterior cytoskeletal structures such as the manchette.</text>
</comment>
<comment type="subunit">
    <text evidence="3 4">Self-associates. Interacts with SYNE1 and SPAG4/SUN4. Proposed to form a spermatogenesis-specific LINC complex with SYNE1 during sperm head formation possibly implicating a SUN domain-based heterotrimer with SPAG4/SUN4 associating with SYNE1. Can interact with SYNE3; the interaction is questioned by missing colocalization in spermatids.</text>
</comment>
<comment type="subcellular location">
    <subcellularLocation>
        <location evidence="7">Membrane</location>
        <topology evidence="7">Single-pass membrane protein</topology>
    </subcellularLocation>
    <subcellularLocation>
        <location evidence="3">Nucleus envelope</location>
    </subcellularLocation>
    <subcellularLocation>
        <location evidence="7">Nucleus inner membrane</location>
    </subcellularLocation>
    <text evidence="3">Localized to spermatid nucleus posterior pole lateral regions excluding the implantation fossa during entire sperm head elongation.</text>
</comment>
<comment type="alternative products">
    <event type="alternative splicing"/>
    <isoform>
        <id>Q5SS91-1</id>
        <name>1</name>
        <sequence type="displayed"/>
    </isoform>
    <isoform>
        <id>Q5SS91-2</id>
        <name>2</name>
        <sequence type="described" ref="VSP_029750"/>
    </isoform>
</comment>
<comment type="tissue specificity">
    <text evidence="3">Specifically expressed in testis (at protein level).</text>
</comment>
<comment type="developmental stage">
    <text evidence="3">Exclusively expressed in postmeiotic stages of male germ cell development. First detected at day 25 p.p. when spermatids are most frequent within seminiferous tubules.</text>
</comment>
<gene>
    <name type="primary">Sun3</name>
    <name type="synonym">Sunc1</name>
</gene>
<protein>
    <recommendedName>
        <fullName>SUN domain-containing protein 3</fullName>
    </recommendedName>
    <alternativeName>
        <fullName>Sad1/unc-84 domain-containing protein 1</fullName>
    </alternativeName>
</protein>
<dbReference type="EMBL" id="AK052771">
    <property type="protein sequence ID" value="BAC35140.1"/>
    <property type="molecule type" value="mRNA"/>
</dbReference>
<dbReference type="EMBL" id="AK132922">
    <property type="protein sequence ID" value="BAE21423.1"/>
    <property type="molecule type" value="mRNA"/>
</dbReference>
<dbReference type="EMBL" id="AL669837">
    <property type="status" value="NOT_ANNOTATED_CDS"/>
    <property type="molecule type" value="Genomic_DNA"/>
</dbReference>
<dbReference type="EMBL" id="BC109334">
    <property type="protein sequence ID" value="AAI09335.1"/>
    <property type="molecule type" value="mRNA"/>
</dbReference>
<dbReference type="CCDS" id="CCDS24430.1">
    <molecule id="Q5SS91-2"/>
</dbReference>
<dbReference type="CCDS" id="CCDS70140.1">
    <molecule id="Q5SS91-1"/>
</dbReference>
<dbReference type="RefSeq" id="NP_001277448.1">
    <molecule id="Q5SS91-1"/>
    <property type="nucleotide sequence ID" value="NM_001290519.1"/>
</dbReference>
<dbReference type="RefSeq" id="NP_001277449.1">
    <molecule id="Q5SS91-2"/>
    <property type="nucleotide sequence ID" value="NM_001290520.1"/>
</dbReference>
<dbReference type="RefSeq" id="NP_808244.1">
    <molecule id="Q5SS91-2"/>
    <property type="nucleotide sequence ID" value="NM_177576.3"/>
</dbReference>
<dbReference type="RefSeq" id="XP_030101563.1">
    <molecule id="Q5SS91-2"/>
    <property type="nucleotide sequence ID" value="XM_030245703.2"/>
</dbReference>
<dbReference type="RefSeq" id="XP_036012350.1">
    <molecule id="Q5SS91-2"/>
    <property type="nucleotide sequence ID" value="XM_036156457.1"/>
</dbReference>
<dbReference type="SMR" id="Q5SS91"/>
<dbReference type="FunCoup" id="Q5SS91">
    <property type="interactions" value="34"/>
</dbReference>
<dbReference type="IntAct" id="Q5SS91">
    <property type="interactions" value="3"/>
</dbReference>
<dbReference type="STRING" id="10090.ENSMUSP00000045199"/>
<dbReference type="PhosphoSitePlus" id="Q5SS91"/>
<dbReference type="PaxDb" id="10090-ENSMUSP00000099973"/>
<dbReference type="Antibodypedia" id="1892">
    <property type="antibodies" value="43 antibodies from 15 providers"/>
</dbReference>
<dbReference type="Ensembl" id="ENSMUST00000043377.6">
    <molecule id="Q5SS91-1"/>
    <property type="protein sequence ID" value="ENSMUSP00000045199.6"/>
    <property type="gene ID" value="ENSMUSG00000040985.14"/>
</dbReference>
<dbReference type="Ensembl" id="ENSMUST00000102909.8">
    <molecule id="Q5SS91-2"/>
    <property type="protein sequence ID" value="ENSMUSP00000099973.2"/>
    <property type="gene ID" value="ENSMUSG00000040985.14"/>
</dbReference>
<dbReference type="GeneID" id="194974"/>
<dbReference type="KEGG" id="mmu:194974"/>
<dbReference type="UCSC" id="uc007hzt.1">
    <molecule id="Q5SS91-1"/>
    <property type="organism name" value="mouse"/>
</dbReference>
<dbReference type="AGR" id="MGI:3041199"/>
<dbReference type="CTD" id="256979"/>
<dbReference type="MGI" id="MGI:3041199">
    <property type="gene designation" value="Sun3"/>
</dbReference>
<dbReference type="VEuPathDB" id="HostDB:ENSMUSG00000040985"/>
<dbReference type="eggNOG" id="KOG2687">
    <property type="taxonomic scope" value="Eukaryota"/>
</dbReference>
<dbReference type="GeneTree" id="ENSGT00940000161393"/>
<dbReference type="HOGENOM" id="CLU_043737_0_0_1"/>
<dbReference type="InParanoid" id="Q5SS91"/>
<dbReference type="OMA" id="QGHILIR"/>
<dbReference type="OrthoDB" id="342281at2759"/>
<dbReference type="PhylomeDB" id="Q5SS91"/>
<dbReference type="TreeFam" id="TF323915"/>
<dbReference type="BioGRID-ORCS" id="194974">
    <property type="hits" value="2 hits in 76 CRISPR screens"/>
</dbReference>
<dbReference type="ChiTaRS" id="Sun3">
    <property type="organism name" value="mouse"/>
</dbReference>
<dbReference type="PRO" id="PR:Q5SS91"/>
<dbReference type="Proteomes" id="UP000000589">
    <property type="component" value="Chromosome 11"/>
</dbReference>
<dbReference type="RNAct" id="Q5SS91">
    <property type="molecule type" value="protein"/>
</dbReference>
<dbReference type="Bgee" id="ENSMUSG00000040985">
    <property type="expression patterns" value="Expressed in spermatid and 23 other cell types or tissues"/>
</dbReference>
<dbReference type="ExpressionAtlas" id="Q5SS91">
    <property type="expression patterns" value="baseline and differential"/>
</dbReference>
<dbReference type="GO" id="GO:0034993">
    <property type="term" value="C:meiotic nuclear membrane microtubule tethering complex"/>
    <property type="evidence" value="ECO:0000314"/>
    <property type="project" value="MGI"/>
</dbReference>
<dbReference type="GO" id="GO:0005637">
    <property type="term" value="C:nuclear inner membrane"/>
    <property type="evidence" value="ECO:0007669"/>
    <property type="project" value="UniProtKB-SubCell"/>
</dbReference>
<dbReference type="FunFam" id="2.60.120.260:FF:000074">
    <property type="entry name" value="Sad1 and UNC84 domain-containing 3"/>
    <property type="match status" value="1"/>
</dbReference>
<dbReference type="Gene3D" id="2.60.120.260">
    <property type="entry name" value="Galactose-binding domain-like"/>
    <property type="match status" value="1"/>
</dbReference>
<dbReference type="InterPro" id="IPR045119">
    <property type="entry name" value="SUN1-5"/>
</dbReference>
<dbReference type="InterPro" id="IPR012919">
    <property type="entry name" value="SUN_dom"/>
</dbReference>
<dbReference type="PANTHER" id="PTHR12911">
    <property type="entry name" value="SAD1/UNC-84-LIKE PROTEIN-RELATED"/>
    <property type="match status" value="1"/>
</dbReference>
<dbReference type="PANTHER" id="PTHR12911:SF24">
    <property type="entry name" value="SUN DOMAIN-CONTAINING PROTEIN 3"/>
    <property type="match status" value="1"/>
</dbReference>
<dbReference type="Pfam" id="PF07738">
    <property type="entry name" value="Sad1_UNC"/>
    <property type="match status" value="1"/>
</dbReference>
<dbReference type="PROSITE" id="PS51469">
    <property type="entry name" value="SUN"/>
    <property type="match status" value="1"/>
</dbReference>
<proteinExistence type="evidence at protein level"/>
<evidence type="ECO:0000255" key="1"/>
<evidence type="ECO:0000255" key="2">
    <source>
        <dbReference type="PROSITE-ProRule" id="PRU00802"/>
    </source>
</evidence>
<evidence type="ECO:0000269" key="3">
    <source>
    </source>
</evidence>
<evidence type="ECO:0000269" key="4">
    <source>
    </source>
</evidence>
<evidence type="ECO:0000303" key="5">
    <source>
    </source>
</evidence>
<evidence type="ECO:0000303" key="6">
    <source>
    </source>
</evidence>
<evidence type="ECO:0000305" key="7"/>
<evidence type="ECO:0000305" key="8">
    <source>
    </source>
</evidence>